<reference key="1">
    <citation type="submission" date="2008-02" db="EMBL/GenBank/DDBJ databases">
        <title>Complete sequence of Haemophilus somnus 2336.</title>
        <authorList>
            <consortium name="US DOE Joint Genome Institute"/>
            <person name="Siddaramappa S."/>
            <person name="Duncan A.J."/>
            <person name="Challacombe J.F."/>
            <person name="Rainey D."/>
            <person name="Gillaspy A.F."/>
            <person name="Carson M."/>
            <person name="Gipson J."/>
            <person name="Gipson M."/>
            <person name="Bruce D."/>
            <person name="Detter J.C."/>
            <person name="Han C.S."/>
            <person name="Land M."/>
            <person name="Tapia R."/>
            <person name="Thompson L.S."/>
            <person name="Orvis J."/>
            <person name="Zaitshik J."/>
            <person name="Barnes G."/>
            <person name="Brettin T.S."/>
            <person name="Dyer D.W."/>
            <person name="Inzana T.J."/>
        </authorList>
    </citation>
    <scope>NUCLEOTIDE SEQUENCE [LARGE SCALE GENOMIC DNA]</scope>
    <source>
        <strain>2336</strain>
    </source>
</reference>
<sequence length="394" mass="44914">MEQTWRWYGPNDPVSLDDVRQAGATGVVTALHHIPNGQVWSVEEINKRKALLEEKGLVWSVVESVPIHEDIKTQTGNYQQWIDNYKQTLRNLASCGIDIVCYNFMPVLDWTRTDLEYEMPDGSKALRFDQVAFAAFELYILKRPGAEETYSPEEQAEAKAYFDQMSEADIAKLTKNIIAGLPGSEEGYTLEEFQAQLDRYKGISTEKFRTHLAYFLNEIVPVAQEVGIRMAIHPDDPPRPILGLPRIVSTIDDMQWFVDTQPLAANGFTFCTGSYGVLAENDLVKMAEKFADRIYFVHLRSTQREENPRSFHEADHLAGDVNMFGVTKALLTEEYRRKANGDNRLIPMRPDHGHQMLDDLKKKTNPGYSAIGRLRGLAEFRGLELALKKVYFND</sequence>
<feature type="chain" id="PRO_1000075901" description="Mannonate dehydratase">
    <location>
        <begin position="1"/>
        <end position="394"/>
    </location>
</feature>
<comment type="function">
    <text evidence="1">Catalyzes the dehydration of D-mannonate.</text>
</comment>
<comment type="catalytic activity">
    <reaction evidence="1">
        <text>D-mannonate = 2-dehydro-3-deoxy-D-gluconate + H2O</text>
        <dbReference type="Rhea" id="RHEA:20097"/>
        <dbReference type="ChEBI" id="CHEBI:15377"/>
        <dbReference type="ChEBI" id="CHEBI:17767"/>
        <dbReference type="ChEBI" id="CHEBI:57990"/>
        <dbReference type="EC" id="4.2.1.8"/>
    </reaction>
</comment>
<comment type="cofactor">
    <cofactor evidence="1">
        <name>Fe(2+)</name>
        <dbReference type="ChEBI" id="CHEBI:29033"/>
    </cofactor>
    <cofactor evidence="1">
        <name>Mn(2+)</name>
        <dbReference type="ChEBI" id="CHEBI:29035"/>
    </cofactor>
</comment>
<comment type="pathway">
    <text evidence="1">Carbohydrate metabolism; pentose and glucuronate interconversion.</text>
</comment>
<comment type="similarity">
    <text evidence="1">Belongs to the mannonate dehydratase family.</text>
</comment>
<protein>
    <recommendedName>
        <fullName evidence="1">Mannonate dehydratase</fullName>
        <ecNumber evidence="1">4.2.1.8</ecNumber>
    </recommendedName>
    <alternativeName>
        <fullName evidence="1">D-mannonate hydro-lyase</fullName>
    </alternativeName>
</protein>
<name>UXUA_HISS2</name>
<evidence type="ECO:0000255" key="1">
    <source>
        <dbReference type="HAMAP-Rule" id="MF_00106"/>
    </source>
</evidence>
<keyword id="KW-0408">Iron</keyword>
<keyword id="KW-0456">Lyase</keyword>
<keyword id="KW-0464">Manganese</keyword>
<gene>
    <name evidence="1" type="primary">uxuA</name>
    <name type="ordered locus">HSM_0415</name>
</gene>
<proteinExistence type="inferred from homology"/>
<organism>
    <name type="scientific">Histophilus somni (strain 2336)</name>
    <name type="common">Haemophilus somnus</name>
    <dbReference type="NCBI Taxonomy" id="228400"/>
    <lineage>
        <taxon>Bacteria</taxon>
        <taxon>Pseudomonadati</taxon>
        <taxon>Pseudomonadota</taxon>
        <taxon>Gammaproteobacteria</taxon>
        <taxon>Pasteurellales</taxon>
        <taxon>Pasteurellaceae</taxon>
        <taxon>Histophilus</taxon>
    </lineage>
</organism>
<dbReference type="EC" id="4.2.1.8" evidence="1"/>
<dbReference type="EMBL" id="CP000947">
    <property type="protein sequence ID" value="ACA32058.1"/>
    <property type="molecule type" value="Genomic_DNA"/>
</dbReference>
<dbReference type="RefSeq" id="WP_012341261.1">
    <property type="nucleotide sequence ID" value="NC_010519.1"/>
</dbReference>
<dbReference type="SMR" id="B0URI0"/>
<dbReference type="STRING" id="228400.HSM_0415"/>
<dbReference type="GeneID" id="31486695"/>
<dbReference type="KEGG" id="hsm:HSM_0415"/>
<dbReference type="HOGENOM" id="CLU_058621_2_0_6"/>
<dbReference type="UniPathway" id="UPA00246"/>
<dbReference type="GO" id="GO:0008198">
    <property type="term" value="F:ferrous iron binding"/>
    <property type="evidence" value="ECO:0007669"/>
    <property type="project" value="TreeGrafter"/>
</dbReference>
<dbReference type="GO" id="GO:0030145">
    <property type="term" value="F:manganese ion binding"/>
    <property type="evidence" value="ECO:0007669"/>
    <property type="project" value="TreeGrafter"/>
</dbReference>
<dbReference type="GO" id="GO:0008927">
    <property type="term" value="F:mannonate dehydratase activity"/>
    <property type="evidence" value="ECO:0007669"/>
    <property type="project" value="UniProtKB-UniRule"/>
</dbReference>
<dbReference type="GO" id="GO:0042840">
    <property type="term" value="P:D-glucuronate catabolic process"/>
    <property type="evidence" value="ECO:0007669"/>
    <property type="project" value="TreeGrafter"/>
</dbReference>
<dbReference type="FunFam" id="3.20.20.150:FF:000004">
    <property type="entry name" value="Mannonate dehydratase"/>
    <property type="match status" value="1"/>
</dbReference>
<dbReference type="FunFam" id="3.20.20.150:FF:000005">
    <property type="entry name" value="Mannonate dehydratase"/>
    <property type="match status" value="1"/>
</dbReference>
<dbReference type="Gene3D" id="3.20.20.150">
    <property type="entry name" value="Divalent-metal-dependent TIM barrel enzymes"/>
    <property type="match status" value="1"/>
</dbReference>
<dbReference type="HAMAP" id="MF_00106">
    <property type="entry name" value="UxuA"/>
    <property type="match status" value="1"/>
</dbReference>
<dbReference type="InterPro" id="IPR004628">
    <property type="entry name" value="Man_deHydtase"/>
</dbReference>
<dbReference type="InterPro" id="IPR036237">
    <property type="entry name" value="Xyl_isomerase-like_sf"/>
</dbReference>
<dbReference type="NCBIfam" id="NF003027">
    <property type="entry name" value="PRK03906.1"/>
    <property type="match status" value="1"/>
</dbReference>
<dbReference type="NCBIfam" id="TIGR00695">
    <property type="entry name" value="uxuA"/>
    <property type="match status" value="1"/>
</dbReference>
<dbReference type="PANTHER" id="PTHR30387">
    <property type="entry name" value="MANNONATE DEHYDRATASE"/>
    <property type="match status" value="1"/>
</dbReference>
<dbReference type="PANTHER" id="PTHR30387:SF2">
    <property type="entry name" value="MANNONATE DEHYDRATASE"/>
    <property type="match status" value="1"/>
</dbReference>
<dbReference type="Pfam" id="PF03786">
    <property type="entry name" value="UxuA"/>
    <property type="match status" value="1"/>
</dbReference>
<dbReference type="PIRSF" id="PIRSF016049">
    <property type="entry name" value="Man_dehyd"/>
    <property type="match status" value="1"/>
</dbReference>
<dbReference type="SUPFAM" id="SSF51658">
    <property type="entry name" value="Xylose isomerase-like"/>
    <property type="match status" value="1"/>
</dbReference>
<accession>B0URI0</accession>